<evidence type="ECO:0000255" key="1">
    <source>
        <dbReference type="HAMAP-Rule" id="MF_00503"/>
    </source>
</evidence>
<evidence type="ECO:0000305" key="2"/>
<accession>B7UQL2</accession>
<sequence>MQVILLDKVANLGSLGDQVNVKAGYARNFLVPQGKAVPATKKNIEFFEARRAELEAKLAEVLAAANARAEKINALETVTIASKAGDEGKLFGSIGTRDIADAVTAAGVEVAKSEVRLPNGVLRTTGEHEVSFQVHSEVFAKVIVNVVAE</sequence>
<proteinExistence type="inferred from homology"/>
<name>RL9_ECO27</name>
<feature type="chain" id="PRO_1000196244" description="Large ribosomal subunit protein bL9">
    <location>
        <begin position="1"/>
        <end position="149"/>
    </location>
</feature>
<feature type="modified residue" description="N6-acetyllysine" evidence="1">
    <location>
        <position position="89"/>
    </location>
</feature>
<reference key="1">
    <citation type="journal article" date="2009" name="J. Bacteriol.">
        <title>Complete genome sequence and comparative genome analysis of enteropathogenic Escherichia coli O127:H6 strain E2348/69.</title>
        <authorList>
            <person name="Iguchi A."/>
            <person name="Thomson N.R."/>
            <person name="Ogura Y."/>
            <person name="Saunders D."/>
            <person name="Ooka T."/>
            <person name="Henderson I.R."/>
            <person name="Harris D."/>
            <person name="Asadulghani M."/>
            <person name="Kurokawa K."/>
            <person name="Dean P."/>
            <person name="Kenny B."/>
            <person name="Quail M.A."/>
            <person name="Thurston S."/>
            <person name="Dougan G."/>
            <person name="Hayashi T."/>
            <person name="Parkhill J."/>
            <person name="Frankel G."/>
        </authorList>
    </citation>
    <scope>NUCLEOTIDE SEQUENCE [LARGE SCALE GENOMIC DNA]</scope>
    <source>
        <strain>E2348/69 / EPEC</strain>
    </source>
</reference>
<keyword id="KW-0007">Acetylation</keyword>
<keyword id="KW-1185">Reference proteome</keyword>
<keyword id="KW-0687">Ribonucleoprotein</keyword>
<keyword id="KW-0689">Ribosomal protein</keyword>
<keyword id="KW-0694">RNA-binding</keyword>
<keyword id="KW-0699">rRNA-binding</keyword>
<comment type="function">
    <text evidence="1">Binds to the 23S rRNA.</text>
</comment>
<comment type="similarity">
    <text evidence="1">Belongs to the bacterial ribosomal protein bL9 family.</text>
</comment>
<organism>
    <name type="scientific">Escherichia coli O127:H6 (strain E2348/69 / EPEC)</name>
    <dbReference type="NCBI Taxonomy" id="574521"/>
    <lineage>
        <taxon>Bacteria</taxon>
        <taxon>Pseudomonadati</taxon>
        <taxon>Pseudomonadota</taxon>
        <taxon>Gammaproteobacteria</taxon>
        <taxon>Enterobacterales</taxon>
        <taxon>Enterobacteriaceae</taxon>
        <taxon>Escherichia</taxon>
    </lineage>
</organism>
<dbReference type="EMBL" id="FM180568">
    <property type="protein sequence ID" value="CAS12074.1"/>
    <property type="molecule type" value="Genomic_DNA"/>
</dbReference>
<dbReference type="RefSeq" id="WP_001196062.1">
    <property type="nucleotide sequence ID" value="NC_011601.1"/>
</dbReference>
<dbReference type="SMR" id="B7UQL2"/>
<dbReference type="GeneID" id="93777620"/>
<dbReference type="KEGG" id="ecg:E2348C_4526"/>
<dbReference type="HOGENOM" id="CLU_078938_4_1_6"/>
<dbReference type="Proteomes" id="UP000008205">
    <property type="component" value="Chromosome"/>
</dbReference>
<dbReference type="GO" id="GO:1990904">
    <property type="term" value="C:ribonucleoprotein complex"/>
    <property type="evidence" value="ECO:0007669"/>
    <property type="project" value="UniProtKB-KW"/>
</dbReference>
<dbReference type="GO" id="GO:0005840">
    <property type="term" value="C:ribosome"/>
    <property type="evidence" value="ECO:0007669"/>
    <property type="project" value="UniProtKB-KW"/>
</dbReference>
<dbReference type="GO" id="GO:0019843">
    <property type="term" value="F:rRNA binding"/>
    <property type="evidence" value="ECO:0007669"/>
    <property type="project" value="UniProtKB-UniRule"/>
</dbReference>
<dbReference type="GO" id="GO:0003735">
    <property type="term" value="F:structural constituent of ribosome"/>
    <property type="evidence" value="ECO:0007669"/>
    <property type="project" value="InterPro"/>
</dbReference>
<dbReference type="GO" id="GO:0006412">
    <property type="term" value="P:translation"/>
    <property type="evidence" value="ECO:0007669"/>
    <property type="project" value="UniProtKB-UniRule"/>
</dbReference>
<dbReference type="FunFam" id="3.10.430.100:FF:000001">
    <property type="entry name" value="50S ribosomal protein L9"/>
    <property type="match status" value="1"/>
</dbReference>
<dbReference type="FunFam" id="3.40.5.10:FF:000001">
    <property type="entry name" value="50S ribosomal protein L9"/>
    <property type="match status" value="1"/>
</dbReference>
<dbReference type="Gene3D" id="3.10.430.100">
    <property type="entry name" value="Ribosomal protein L9, C-terminal domain"/>
    <property type="match status" value="1"/>
</dbReference>
<dbReference type="Gene3D" id="3.40.5.10">
    <property type="entry name" value="Ribosomal protein L9, N-terminal domain"/>
    <property type="match status" value="1"/>
</dbReference>
<dbReference type="HAMAP" id="MF_00503">
    <property type="entry name" value="Ribosomal_bL9"/>
    <property type="match status" value="1"/>
</dbReference>
<dbReference type="InterPro" id="IPR000244">
    <property type="entry name" value="Ribosomal_bL9"/>
</dbReference>
<dbReference type="InterPro" id="IPR009027">
    <property type="entry name" value="Ribosomal_bL9/RNase_H1_N"/>
</dbReference>
<dbReference type="InterPro" id="IPR020594">
    <property type="entry name" value="Ribosomal_bL9_bac/chp"/>
</dbReference>
<dbReference type="InterPro" id="IPR020069">
    <property type="entry name" value="Ribosomal_bL9_C"/>
</dbReference>
<dbReference type="InterPro" id="IPR036791">
    <property type="entry name" value="Ribosomal_bL9_C_sf"/>
</dbReference>
<dbReference type="InterPro" id="IPR020070">
    <property type="entry name" value="Ribosomal_bL9_N"/>
</dbReference>
<dbReference type="InterPro" id="IPR036935">
    <property type="entry name" value="Ribosomal_bL9_N_sf"/>
</dbReference>
<dbReference type="NCBIfam" id="TIGR00158">
    <property type="entry name" value="L9"/>
    <property type="match status" value="1"/>
</dbReference>
<dbReference type="PANTHER" id="PTHR21368">
    <property type="entry name" value="50S RIBOSOMAL PROTEIN L9"/>
    <property type="match status" value="1"/>
</dbReference>
<dbReference type="Pfam" id="PF03948">
    <property type="entry name" value="Ribosomal_L9_C"/>
    <property type="match status" value="1"/>
</dbReference>
<dbReference type="Pfam" id="PF01281">
    <property type="entry name" value="Ribosomal_L9_N"/>
    <property type="match status" value="1"/>
</dbReference>
<dbReference type="SUPFAM" id="SSF55658">
    <property type="entry name" value="L9 N-domain-like"/>
    <property type="match status" value="1"/>
</dbReference>
<dbReference type="SUPFAM" id="SSF55653">
    <property type="entry name" value="Ribosomal protein L9 C-domain"/>
    <property type="match status" value="1"/>
</dbReference>
<dbReference type="PROSITE" id="PS00651">
    <property type="entry name" value="RIBOSOMAL_L9"/>
    <property type="match status" value="1"/>
</dbReference>
<protein>
    <recommendedName>
        <fullName evidence="1">Large ribosomal subunit protein bL9</fullName>
    </recommendedName>
    <alternativeName>
        <fullName evidence="2">50S ribosomal protein L9</fullName>
    </alternativeName>
</protein>
<gene>
    <name evidence="1" type="primary">rplI</name>
    <name type="ordered locus">E2348C_4526</name>
</gene>